<keyword id="KW-0963">Cytoplasm</keyword>
<keyword id="KW-0341">Growth regulation</keyword>
<keyword id="KW-0648">Protein biosynthesis</keyword>
<reference key="1">
    <citation type="journal article" date="2011" name="New Phytol.">
        <title>The cauliflower Orange gene enhances petiole elongation by suppressing expression of eukaryotic release factor 1.</title>
        <authorList>
            <person name="Zhou X."/>
            <person name="Sun T.H."/>
            <person name="Wang N."/>
            <person name="Ling H.Q."/>
            <person name="Lu S."/>
            <person name="Li L."/>
        </authorList>
    </citation>
    <scope>NUCLEOTIDE SEQUENCE [MRNA]</scope>
</reference>
<proteinExistence type="evidence at transcript level"/>
<protein>
    <recommendedName>
        <fullName evidence="3">Eukaryotic peptide chain release factor subunit 1-1</fullName>
        <shortName evidence="2">BoeRF1-1</shortName>
        <shortName evidence="2">Eukaryotic release factor 1-1</shortName>
    </recommendedName>
</protein>
<gene>
    <name evidence="3" type="primary">ERF1-1</name>
</gene>
<comment type="function">
    <text evidence="1">Directs the termination of nascent peptide synthesis (translation) in response to the termination codons UAA, UAG and UGA. Modulates plant growth and development.</text>
</comment>
<comment type="subunit">
    <text evidence="3">Heterodimer of two subunits, one of which binds GTP.</text>
</comment>
<comment type="subcellular location">
    <subcellularLocation>
        <location evidence="1">Cytoplasm</location>
    </subcellularLocation>
</comment>
<comment type="similarity">
    <text evidence="3">Belongs to the eukaryotic release factor 1 family.</text>
</comment>
<feature type="chain" id="PRO_0000438017" description="Eukaryotic peptide chain release factor subunit 1-1">
    <location>
        <begin position="1"/>
        <end position="434"/>
    </location>
</feature>
<sequence length="434" mass="48653">MGDNHGDDKNIEIWKIKKLIKSLEAARGNGTSMISLIMPPRDQVSRVTKMLGDEYGTASNIKSRVNRQSVLGAITSAQQRLKLYNRVPPNGLVLYTGTIVNDEGKEKKVTIDFEPFKPINNTLYLCDNKFHTEALNELLESDDKFGFIVMDGNGTLFGTLSGNTREVLHKFSVDLPKKHGRGGQSALRFARLRMEKRHNYVRKTAELATQYYINPATSQPNVSGLILAGSADFKTELSQSDMFDPRLAAKILNVVDVSYGGENGFNQAIELSSEILANVKFIQEKRLIGKYFEEISQDTGKYVFGVEDTLNALDSGAVETLIVWENLDINRYVLKNSTTGETVIKHLNKEQEANTENFKVDNNDLDVEDKMSLLEWLANECKRFGCALEFVTNKSQEGSQFCRGFGGVGGILRYQLDMTAFDEDLDVYDDDESE</sequence>
<dbReference type="EMBL" id="GU908159">
    <property type="protein sequence ID" value="ADE87483.1"/>
    <property type="molecule type" value="mRNA"/>
</dbReference>
<dbReference type="SMR" id="D5LHJ0"/>
<dbReference type="GO" id="GO:0005737">
    <property type="term" value="C:cytoplasm"/>
    <property type="evidence" value="ECO:0007669"/>
    <property type="project" value="UniProtKB-SubCell"/>
</dbReference>
<dbReference type="GO" id="GO:0003747">
    <property type="term" value="F:translation release factor activity"/>
    <property type="evidence" value="ECO:0007669"/>
    <property type="project" value="InterPro"/>
</dbReference>
<dbReference type="FunFam" id="3.30.420.60:FF:000001">
    <property type="entry name" value="Eukaryotic peptide chain release factor subunit 1"/>
    <property type="match status" value="1"/>
</dbReference>
<dbReference type="FunFam" id="3.30.960.10:FF:000001">
    <property type="entry name" value="Eukaryotic peptide chain release factor subunit 1"/>
    <property type="match status" value="1"/>
</dbReference>
<dbReference type="FunFam" id="3.30.1330.30:FF:000006">
    <property type="entry name" value="Peptide chain release factor subunit 1"/>
    <property type="match status" value="1"/>
</dbReference>
<dbReference type="Gene3D" id="3.30.1330.30">
    <property type="match status" value="1"/>
</dbReference>
<dbReference type="Gene3D" id="3.30.960.10">
    <property type="entry name" value="eRF1 domain 1"/>
    <property type="match status" value="1"/>
</dbReference>
<dbReference type="Gene3D" id="3.30.420.60">
    <property type="entry name" value="eRF1 domain 2"/>
    <property type="match status" value="1"/>
</dbReference>
<dbReference type="InterPro" id="IPR042226">
    <property type="entry name" value="eFR1_2_sf"/>
</dbReference>
<dbReference type="InterPro" id="IPR005140">
    <property type="entry name" value="eRF1_1_Pelota"/>
</dbReference>
<dbReference type="InterPro" id="IPR024049">
    <property type="entry name" value="eRF1_1_sf"/>
</dbReference>
<dbReference type="InterPro" id="IPR005141">
    <property type="entry name" value="eRF1_2"/>
</dbReference>
<dbReference type="InterPro" id="IPR005142">
    <property type="entry name" value="eRF1_3"/>
</dbReference>
<dbReference type="InterPro" id="IPR004403">
    <property type="entry name" value="Peptide_chain-rel_eRF1/aRF1"/>
</dbReference>
<dbReference type="InterPro" id="IPR029064">
    <property type="entry name" value="Ribosomal_eL30-like_sf"/>
</dbReference>
<dbReference type="NCBIfam" id="TIGR03676">
    <property type="entry name" value="aRF1_eRF1"/>
    <property type="match status" value="1"/>
</dbReference>
<dbReference type="PANTHER" id="PTHR10113">
    <property type="entry name" value="PEPTIDE CHAIN RELEASE FACTOR SUBUNIT 1"/>
    <property type="match status" value="1"/>
</dbReference>
<dbReference type="Pfam" id="PF03463">
    <property type="entry name" value="eRF1_1"/>
    <property type="match status" value="1"/>
</dbReference>
<dbReference type="Pfam" id="PF03464">
    <property type="entry name" value="eRF1_2"/>
    <property type="match status" value="1"/>
</dbReference>
<dbReference type="Pfam" id="PF03465">
    <property type="entry name" value="eRF1_3"/>
    <property type="match status" value="1"/>
</dbReference>
<dbReference type="SMART" id="SM01194">
    <property type="entry name" value="eRF1_1"/>
    <property type="match status" value="1"/>
</dbReference>
<dbReference type="SUPFAM" id="SSF55315">
    <property type="entry name" value="L30e-like"/>
    <property type="match status" value="1"/>
</dbReference>
<dbReference type="SUPFAM" id="SSF55481">
    <property type="entry name" value="N-terminal domain of eukaryotic peptide chain release factor subunit 1, ERF1"/>
    <property type="match status" value="1"/>
</dbReference>
<dbReference type="SUPFAM" id="SSF53137">
    <property type="entry name" value="Translational machinery components"/>
    <property type="match status" value="1"/>
</dbReference>
<accession>D5LHJ0</accession>
<name>ERF1X_BRAOB</name>
<organism>
    <name type="scientific">Brassica oleracea var. botrytis</name>
    <name type="common">Cauliflower</name>
    <dbReference type="NCBI Taxonomy" id="3715"/>
    <lineage>
        <taxon>Eukaryota</taxon>
        <taxon>Viridiplantae</taxon>
        <taxon>Streptophyta</taxon>
        <taxon>Embryophyta</taxon>
        <taxon>Tracheophyta</taxon>
        <taxon>Spermatophyta</taxon>
        <taxon>Magnoliopsida</taxon>
        <taxon>eudicotyledons</taxon>
        <taxon>Gunneridae</taxon>
        <taxon>Pentapetalae</taxon>
        <taxon>rosids</taxon>
        <taxon>malvids</taxon>
        <taxon>Brassicales</taxon>
        <taxon>Brassicaceae</taxon>
        <taxon>Brassiceae</taxon>
        <taxon>Brassica</taxon>
    </lineage>
</organism>
<evidence type="ECO:0000250" key="1">
    <source>
        <dbReference type="UniProtKB" id="Q39097"/>
    </source>
</evidence>
<evidence type="ECO:0000303" key="2">
    <source>
    </source>
</evidence>
<evidence type="ECO:0000305" key="3"/>